<accession>B7I976</accession>
<dbReference type="EC" id="2.4.2.29" evidence="1"/>
<dbReference type="EMBL" id="CP001182">
    <property type="protein sequence ID" value="ACJ41985.1"/>
    <property type="molecule type" value="Genomic_DNA"/>
</dbReference>
<dbReference type="RefSeq" id="WP_000667229.1">
    <property type="nucleotide sequence ID" value="NC_011586.2"/>
</dbReference>
<dbReference type="SMR" id="B7I976"/>
<dbReference type="KEGG" id="abn:AB57_3415"/>
<dbReference type="HOGENOM" id="CLU_022060_0_1_6"/>
<dbReference type="UniPathway" id="UPA00392"/>
<dbReference type="Proteomes" id="UP000007094">
    <property type="component" value="Chromosome"/>
</dbReference>
<dbReference type="GO" id="GO:0005829">
    <property type="term" value="C:cytosol"/>
    <property type="evidence" value="ECO:0007669"/>
    <property type="project" value="TreeGrafter"/>
</dbReference>
<dbReference type="GO" id="GO:0046872">
    <property type="term" value="F:metal ion binding"/>
    <property type="evidence" value="ECO:0007669"/>
    <property type="project" value="UniProtKB-KW"/>
</dbReference>
<dbReference type="GO" id="GO:0008479">
    <property type="term" value="F:tRNA-guanosine(34) queuine transglycosylase activity"/>
    <property type="evidence" value="ECO:0007669"/>
    <property type="project" value="UniProtKB-UniRule"/>
</dbReference>
<dbReference type="GO" id="GO:0008616">
    <property type="term" value="P:queuosine biosynthetic process"/>
    <property type="evidence" value="ECO:0007669"/>
    <property type="project" value="UniProtKB-UniRule"/>
</dbReference>
<dbReference type="GO" id="GO:0002099">
    <property type="term" value="P:tRNA wobble guanine modification"/>
    <property type="evidence" value="ECO:0007669"/>
    <property type="project" value="TreeGrafter"/>
</dbReference>
<dbReference type="GO" id="GO:0101030">
    <property type="term" value="P:tRNA-guanine transglycosylation"/>
    <property type="evidence" value="ECO:0007669"/>
    <property type="project" value="InterPro"/>
</dbReference>
<dbReference type="FunFam" id="3.20.20.105:FF:000001">
    <property type="entry name" value="Queuine tRNA-ribosyltransferase"/>
    <property type="match status" value="1"/>
</dbReference>
<dbReference type="Gene3D" id="3.20.20.105">
    <property type="entry name" value="Queuine tRNA-ribosyltransferase-like"/>
    <property type="match status" value="1"/>
</dbReference>
<dbReference type="HAMAP" id="MF_00168">
    <property type="entry name" value="Q_tRNA_Tgt"/>
    <property type="match status" value="1"/>
</dbReference>
<dbReference type="InterPro" id="IPR050076">
    <property type="entry name" value="ArchSynthase1/Queuine_TRR"/>
</dbReference>
<dbReference type="InterPro" id="IPR004803">
    <property type="entry name" value="TGT"/>
</dbReference>
<dbReference type="InterPro" id="IPR036511">
    <property type="entry name" value="TGT-like_sf"/>
</dbReference>
<dbReference type="InterPro" id="IPR002616">
    <property type="entry name" value="tRNA_ribo_trans-like"/>
</dbReference>
<dbReference type="NCBIfam" id="TIGR00430">
    <property type="entry name" value="Q_tRNA_tgt"/>
    <property type="match status" value="1"/>
</dbReference>
<dbReference type="NCBIfam" id="TIGR00449">
    <property type="entry name" value="tgt_general"/>
    <property type="match status" value="1"/>
</dbReference>
<dbReference type="PANTHER" id="PTHR46499">
    <property type="entry name" value="QUEUINE TRNA-RIBOSYLTRANSFERASE"/>
    <property type="match status" value="1"/>
</dbReference>
<dbReference type="PANTHER" id="PTHR46499:SF1">
    <property type="entry name" value="QUEUINE TRNA-RIBOSYLTRANSFERASE"/>
    <property type="match status" value="1"/>
</dbReference>
<dbReference type="Pfam" id="PF01702">
    <property type="entry name" value="TGT"/>
    <property type="match status" value="1"/>
</dbReference>
<dbReference type="SUPFAM" id="SSF51713">
    <property type="entry name" value="tRNA-guanine transglycosylase"/>
    <property type="match status" value="1"/>
</dbReference>
<evidence type="ECO:0000255" key="1">
    <source>
        <dbReference type="HAMAP-Rule" id="MF_00168"/>
    </source>
</evidence>
<sequence>MKFEKLGQSGRARRGRLTLEHGVVETPVFMPVGTYGTVKGMLPRDIEDIQAQIILGNTFHLYLRPGLEVIKQHGGLHDFIKWNKPILTDSGGFQVFSLGAMRKIKEEGVTFRSPIDGSKVFLSPEISMEIQHVLNSDIVMIFDECTPYPATHEEAQKSLQLSLRWAKRCKAHHHDELKNKNALFGIIQGGMYEDLRDESLNGLLEIGFDGYAIGGLSVGEPKEEMIKVLDYLPNKMPHDKPRYLMGVGKPEDIVEAVRRGVDMFDCVMPTRNARNGHYFVTDGLVRIRNSKYRHDQGPLDPHCDCYTCKNFTRAYLFHLEKCGEMLASMLGTIHNLRYYQRLTEGMRDALDNGTFDEFVQDFYARRGLEVPPCPVDE</sequence>
<gene>
    <name evidence="1" type="primary">tgt</name>
    <name type="ordered locus">AB57_3415</name>
</gene>
<name>TGT_ACIB5</name>
<keyword id="KW-0328">Glycosyltransferase</keyword>
<keyword id="KW-0479">Metal-binding</keyword>
<keyword id="KW-0671">Queuosine biosynthesis</keyword>
<keyword id="KW-0808">Transferase</keyword>
<keyword id="KW-0819">tRNA processing</keyword>
<keyword id="KW-0862">Zinc</keyword>
<comment type="function">
    <text evidence="1">Catalyzes the base-exchange of a guanine (G) residue with the queuine precursor 7-aminomethyl-7-deazaguanine (PreQ1) at position 34 (anticodon wobble position) in tRNAs with GU(N) anticodons (tRNA-Asp, -Asn, -His and -Tyr). Catalysis occurs through a double-displacement mechanism. The nucleophile active site attacks the C1' of nucleotide 34 to detach the guanine base from the RNA, forming a covalent enzyme-RNA intermediate. The proton acceptor active site deprotonates the incoming PreQ1, allowing a nucleophilic attack on the C1' of the ribose to form the product. After dissociation, two additional enzymatic reactions on the tRNA convert PreQ1 to queuine (Q), resulting in the hypermodified nucleoside queuosine (7-(((4,5-cis-dihydroxy-2-cyclopenten-1-yl)amino)methyl)-7-deazaguanosine).</text>
</comment>
<comment type="catalytic activity">
    <reaction evidence="1">
        <text>7-aminomethyl-7-carbaguanine + guanosine(34) in tRNA = 7-aminomethyl-7-carbaguanosine(34) in tRNA + guanine</text>
        <dbReference type="Rhea" id="RHEA:24104"/>
        <dbReference type="Rhea" id="RHEA-COMP:10341"/>
        <dbReference type="Rhea" id="RHEA-COMP:10342"/>
        <dbReference type="ChEBI" id="CHEBI:16235"/>
        <dbReference type="ChEBI" id="CHEBI:58703"/>
        <dbReference type="ChEBI" id="CHEBI:74269"/>
        <dbReference type="ChEBI" id="CHEBI:82833"/>
        <dbReference type="EC" id="2.4.2.29"/>
    </reaction>
</comment>
<comment type="cofactor">
    <cofactor evidence="1">
        <name>Zn(2+)</name>
        <dbReference type="ChEBI" id="CHEBI:29105"/>
    </cofactor>
    <text evidence="1">Binds 1 zinc ion per subunit.</text>
</comment>
<comment type="pathway">
    <text evidence="1">tRNA modification; tRNA-queuosine biosynthesis.</text>
</comment>
<comment type="subunit">
    <text evidence="1">Homodimer. Within each dimer, one monomer is responsible for RNA recognition and catalysis, while the other monomer binds to the replacement base PreQ1.</text>
</comment>
<comment type="similarity">
    <text evidence="1">Belongs to the queuine tRNA-ribosyltransferase family.</text>
</comment>
<protein>
    <recommendedName>
        <fullName evidence="1">Queuine tRNA-ribosyltransferase</fullName>
        <ecNumber evidence="1">2.4.2.29</ecNumber>
    </recommendedName>
    <alternativeName>
        <fullName evidence="1">Guanine insertion enzyme</fullName>
    </alternativeName>
    <alternativeName>
        <fullName evidence="1">tRNA-guanine transglycosylase</fullName>
    </alternativeName>
</protein>
<organism>
    <name type="scientific">Acinetobacter baumannii (strain AB0057)</name>
    <dbReference type="NCBI Taxonomy" id="480119"/>
    <lineage>
        <taxon>Bacteria</taxon>
        <taxon>Pseudomonadati</taxon>
        <taxon>Pseudomonadota</taxon>
        <taxon>Gammaproteobacteria</taxon>
        <taxon>Moraxellales</taxon>
        <taxon>Moraxellaceae</taxon>
        <taxon>Acinetobacter</taxon>
        <taxon>Acinetobacter calcoaceticus/baumannii complex</taxon>
    </lineage>
</organism>
<proteinExistence type="inferred from homology"/>
<reference key="1">
    <citation type="journal article" date="2008" name="J. Bacteriol.">
        <title>Comparative genome sequence analysis of multidrug-resistant Acinetobacter baumannii.</title>
        <authorList>
            <person name="Adams M.D."/>
            <person name="Goglin K."/>
            <person name="Molyneaux N."/>
            <person name="Hujer K.M."/>
            <person name="Lavender H."/>
            <person name="Jamison J.J."/>
            <person name="MacDonald I.J."/>
            <person name="Martin K.M."/>
            <person name="Russo T."/>
            <person name="Campagnari A.A."/>
            <person name="Hujer A.M."/>
            <person name="Bonomo R.A."/>
            <person name="Gill S.R."/>
        </authorList>
    </citation>
    <scope>NUCLEOTIDE SEQUENCE [LARGE SCALE GENOMIC DNA]</scope>
    <source>
        <strain>AB0057</strain>
    </source>
</reference>
<feature type="chain" id="PRO_1000197974" description="Queuine tRNA-ribosyltransferase">
    <location>
        <begin position="1"/>
        <end position="377"/>
    </location>
</feature>
<feature type="region of interest" description="RNA binding" evidence="1">
    <location>
        <begin position="246"/>
        <end position="252"/>
    </location>
</feature>
<feature type="region of interest" description="RNA binding; important for wobble base 34 recognition" evidence="1">
    <location>
        <begin position="270"/>
        <end position="274"/>
    </location>
</feature>
<feature type="active site" description="Proton acceptor" evidence="1">
    <location>
        <position position="89"/>
    </location>
</feature>
<feature type="active site" description="Nucleophile" evidence="1">
    <location>
        <position position="265"/>
    </location>
</feature>
<feature type="binding site" evidence="1">
    <location>
        <begin position="89"/>
        <end position="93"/>
    </location>
    <ligand>
        <name>substrate</name>
    </ligand>
</feature>
<feature type="binding site" evidence="1">
    <location>
        <position position="143"/>
    </location>
    <ligand>
        <name>substrate</name>
    </ligand>
</feature>
<feature type="binding site" evidence="1">
    <location>
        <position position="188"/>
    </location>
    <ligand>
        <name>substrate</name>
    </ligand>
</feature>
<feature type="binding site" evidence="1">
    <location>
        <position position="215"/>
    </location>
    <ligand>
        <name>substrate</name>
    </ligand>
</feature>
<feature type="binding site" evidence="1">
    <location>
        <position position="303"/>
    </location>
    <ligand>
        <name>Zn(2+)</name>
        <dbReference type="ChEBI" id="CHEBI:29105"/>
    </ligand>
</feature>
<feature type="binding site" evidence="1">
    <location>
        <position position="305"/>
    </location>
    <ligand>
        <name>Zn(2+)</name>
        <dbReference type="ChEBI" id="CHEBI:29105"/>
    </ligand>
</feature>
<feature type="binding site" evidence="1">
    <location>
        <position position="308"/>
    </location>
    <ligand>
        <name>Zn(2+)</name>
        <dbReference type="ChEBI" id="CHEBI:29105"/>
    </ligand>
</feature>
<feature type="binding site" evidence="1">
    <location>
        <position position="334"/>
    </location>
    <ligand>
        <name>Zn(2+)</name>
        <dbReference type="ChEBI" id="CHEBI:29105"/>
    </ligand>
</feature>